<accession>P15453</accession>
<accession>Q578I8</accession>
<keyword id="KW-0002">3D-structure</keyword>
<keyword id="KW-0049">Antioxidant</keyword>
<keyword id="KW-0186">Copper</keyword>
<keyword id="KW-0903">Direct protein sequencing</keyword>
<keyword id="KW-1015">Disulfide bond</keyword>
<keyword id="KW-0479">Metal-binding</keyword>
<keyword id="KW-0560">Oxidoreductase</keyword>
<keyword id="KW-0574">Periplasm</keyword>
<keyword id="KW-0732">Signal</keyword>
<keyword id="KW-0862">Zinc</keyword>
<comment type="function">
    <text>Destroys radicals which are normally produced within the cells and which are toxic to biological systems.</text>
</comment>
<comment type="catalytic activity">
    <reaction>
        <text>2 superoxide + 2 H(+) = H2O2 + O2</text>
        <dbReference type="Rhea" id="RHEA:20696"/>
        <dbReference type="ChEBI" id="CHEBI:15378"/>
        <dbReference type="ChEBI" id="CHEBI:15379"/>
        <dbReference type="ChEBI" id="CHEBI:16240"/>
        <dbReference type="ChEBI" id="CHEBI:18421"/>
        <dbReference type="EC" id="1.15.1.1"/>
    </reaction>
</comment>
<comment type="cofactor">
    <cofactor evidence="1">
        <name>Cu cation</name>
        <dbReference type="ChEBI" id="CHEBI:23378"/>
    </cofactor>
    <text evidence="1">Binds 1 copper ion per subunit.</text>
</comment>
<comment type="cofactor">
    <cofactor evidence="1">
        <name>Zn(2+)</name>
        <dbReference type="ChEBI" id="CHEBI:29105"/>
    </cofactor>
    <text evidence="1">Binds 1 zinc ion per subunit.</text>
</comment>
<comment type="subunit">
    <text>Homodimer.</text>
</comment>
<comment type="subcellular location">
    <subcellularLocation>
        <location>Periplasm</location>
    </subcellularLocation>
</comment>
<comment type="similarity">
    <text evidence="3">Belongs to the Cu-Zn superoxide dismutase family.</text>
</comment>
<protein>
    <recommendedName>
        <fullName>Superoxide dismutase [Cu-Zn]</fullName>
        <ecNumber>1.15.1.1</ecNumber>
    </recommendedName>
</protein>
<evidence type="ECO:0000250" key="1"/>
<evidence type="ECO:0000269" key="2">
    <source>
    </source>
</evidence>
<evidence type="ECO:0000305" key="3"/>
<evidence type="ECO:0007829" key="4">
    <source>
        <dbReference type="PDB" id="4L05"/>
    </source>
</evidence>
<proteinExistence type="evidence at protein level"/>
<organism>
    <name type="scientific">Brucella abortus biovar 1 (strain 9-941)</name>
    <dbReference type="NCBI Taxonomy" id="262698"/>
    <lineage>
        <taxon>Bacteria</taxon>
        <taxon>Pseudomonadati</taxon>
        <taxon>Pseudomonadota</taxon>
        <taxon>Alphaproteobacteria</taxon>
        <taxon>Hyphomicrobiales</taxon>
        <taxon>Brucellaceae</taxon>
        <taxon>Brucella/Ochrobactrum group</taxon>
        <taxon>Brucella</taxon>
    </lineage>
</organism>
<dbReference type="EC" id="1.15.1.1"/>
<dbReference type="EMBL" id="AE017224">
    <property type="protein sequence ID" value="AAX75946.1"/>
    <property type="molecule type" value="Genomic_DNA"/>
</dbReference>
<dbReference type="PIR" id="A33893">
    <property type="entry name" value="A33893"/>
</dbReference>
<dbReference type="RefSeq" id="WP_002972093.1">
    <property type="nucleotide sequence ID" value="NC_006933.1"/>
</dbReference>
<dbReference type="PDB" id="4L05">
    <property type="method" value="X-ray"/>
    <property type="resolution" value="1.10 A"/>
    <property type="chains" value="A=20-173"/>
</dbReference>
<dbReference type="PDBsum" id="4L05"/>
<dbReference type="SMR" id="P15453"/>
<dbReference type="EnsemblBacteria" id="AAX75946">
    <property type="protein sequence ID" value="AAX75946"/>
    <property type="gene ID" value="BruAb2_0527"/>
</dbReference>
<dbReference type="GeneID" id="97535194"/>
<dbReference type="KEGG" id="bmb:BruAb2_0527"/>
<dbReference type="HOGENOM" id="CLU_056632_7_1_5"/>
<dbReference type="EvolutionaryTrace" id="P15453"/>
<dbReference type="PRO" id="PR:P15453"/>
<dbReference type="Proteomes" id="UP000000540">
    <property type="component" value="Chromosome II"/>
</dbReference>
<dbReference type="GO" id="GO:0042597">
    <property type="term" value="C:periplasmic space"/>
    <property type="evidence" value="ECO:0007669"/>
    <property type="project" value="UniProtKB-SubCell"/>
</dbReference>
<dbReference type="GO" id="GO:0005507">
    <property type="term" value="F:copper ion binding"/>
    <property type="evidence" value="ECO:0007669"/>
    <property type="project" value="InterPro"/>
</dbReference>
<dbReference type="GO" id="GO:0004784">
    <property type="term" value="F:superoxide dismutase activity"/>
    <property type="evidence" value="ECO:0007669"/>
    <property type="project" value="UniProtKB-EC"/>
</dbReference>
<dbReference type="CDD" id="cd00305">
    <property type="entry name" value="Cu-Zn_Superoxide_Dismutase"/>
    <property type="match status" value="1"/>
</dbReference>
<dbReference type="Gene3D" id="2.60.40.200">
    <property type="entry name" value="Superoxide dismutase, copper/zinc binding domain"/>
    <property type="match status" value="1"/>
</dbReference>
<dbReference type="InterPro" id="IPR036423">
    <property type="entry name" value="SOD-like_Cu/Zn_dom_sf"/>
</dbReference>
<dbReference type="InterPro" id="IPR024134">
    <property type="entry name" value="SOD_Cu/Zn_/chaperone"/>
</dbReference>
<dbReference type="InterPro" id="IPR018152">
    <property type="entry name" value="SOD_Cu/Zn_BS"/>
</dbReference>
<dbReference type="InterPro" id="IPR001424">
    <property type="entry name" value="SOD_Cu_Zn_dom"/>
</dbReference>
<dbReference type="NCBIfam" id="NF007628">
    <property type="entry name" value="PRK10290.1"/>
    <property type="match status" value="1"/>
</dbReference>
<dbReference type="PANTHER" id="PTHR10003">
    <property type="entry name" value="SUPEROXIDE DISMUTASE CU-ZN -RELATED"/>
    <property type="match status" value="1"/>
</dbReference>
<dbReference type="Pfam" id="PF00080">
    <property type="entry name" value="Sod_Cu"/>
    <property type="match status" value="1"/>
</dbReference>
<dbReference type="SUPFAM" id="SSF49329">
    <property type="entry name" value="Cu,Zn superoxide dismutase-like"/>
    <property type="match status" value="1"/>
</dbReference>
<dbReference type="PROSITE" id="PS00087">
    <property type="entry name" value="SOD_CU_ZN_1"/>
    <property type="match status" value="1"/>
</dbReference>
<dbReference type="PROSITE" id="PS00332">
    <property type="entry name" value="SOD_CU_ZN_2"/>
    <property type="match status" value="1"/>
</dbReference>
<name>SODC_BRUAB</name>
<sequence length="173" mass="18131">MKSLFIASTMVLMAFPAFAESTTVKMYEALPTGPGKEVGTVVISEAPGGLHFKVNMEKLTPGYHGFHVHENPSCAPGEKDGKIVPALAAGGHYDPGNTHHHLGPEGDGHMGDLPRLSANADGKVSETVVAPHLKKLAEIKQRSLMVHVGGDNYSDKPEPLGGGGARFACGVIE</sequence>
<reference key="1">
    <citation type="journal article" date="2005" name="J. Bacteriol.">
        <title>Completion of the genome sequence of Brucella abortus and comparison to the highly similar genomes of Brucella melitensis and Brucella suis.</title>
        <authorList>
            <person name="Halling S.M."/>
            <person name="Peterson-Burch B.D."/>
            <person name="Bricker B.J."/>
            <person name="Zuerner R.L."/>
            <person name="Qing Z."/>
            <person name="Li L.-L."/>
            <person name="Kapur V."/>
            <person name="Alt D.P."/>
            <person name="Olsen S.C."/>
        </authorList>
    </citation>
    <scope>NUCLEOTIDE SEQUENCE [LARGE SCALE GENOMIC DNA]</scope>
    <source>
        <strain>9-941</strain>
    </source>
</reference>
<reference key="2">
    <citation type="journal article" date="1990" name="Biochemistry">
        <title>A protein isolated from Brucella abortus is a Cu-Zn superoxide dismutase.</title>
        <authorList>
            <person name="Beck B.L."/>
            <person name="Tabatabai L.B."/>
            <person name="Mayfield J.E."/>
        </authorList>
    </citation>
    <scope>PROTEIN SEQUENCE OF 20-173</scope>
</reference>
<feature type="signal peptide" evidence="2">
    <location>
        <begin position="1"/>
        <end position="19"/>
    </location>
</feature>
<feature type="chain" id="PRO_0000032820" description="Superoxide dismutase [Cu-Zn]">
    <location>
        <begin position="20"/>
        <end position="173"/>
    </location>
</feature>
<feature type="binding site" evidence="1">
    <location>
        <position position="67"/>
    </location>
    <ligand>
        <name>Cu cation</name>
        <dbReference type="ChEBI" id="CHEBI:23378"/>
        <note>catalytic</note>
    </ligand>
</feature>
<feature type="binding site" evidence="1">
    <location>
        <position position="69"/>
    </location>
    <ligand>
        <name>Cu cation</name>
        <dbReference type="ChEBI" id="CHEBI:23378"/>
        <note>catalytic</note>
    </ligand>
</feature>
<feature type="binding site" evidence="1">
    <location>
        <position position="92"/>
    </location>
    <ligand>
        <name>Cu cation</name>
        <dbReference type="ChEBI" id="CHEBI:23378"/>
        <note>catalytic</note>
    </ligand>
</feature>
<feature type="binding site" evidence="1">
    <location>
        <position position="92"/>
    </location>
    <ligand>
        <name>Zn(2+)</name>
        <dbReference type="ChEBI" id="CHEBI:29105"/>
        <note>structural</note>
    </ligand>
</feature>
<feature type="binding site" evidence="1">
    <location>
        <position position="101"/>
    </location>
    <ligand>
        <name>Zn(2+)</name>
        <dbReference type="ChEBI" id="CHEBI:29105"/>
        <note>structural</note>
    </ligand>
</feature>
<feature type="binding site" evidence="1">
    <location>
        <position position="109"/>
    </location>
    <ligand>
        <name>Zn(2+)</name>
        <dbReference type="ChEBI" id="CHEBI:29105"/>
        <note>structural</note>
    </ligand>
</feature>
<feature type="binding site" evidence="1">
    <location>
        <position position="112"/>
    </location>
    <ligand>
        <name>Zn(2+)</name>
        <dbReference type="ChEBI" id="CHEBI:29105"/>
        <note>structural</note>
    </ligand>
</feature>
<feature type="binding site" evidence="1">
    <location>
        <position position="147"/>
    </location>
    <ligand>
        <name>Cu cation</name>
        <dbReference type="ChEBI" id="CHEBI:23378"/>
        <note>catalytic</note>
    </ligand>
</feature>
<feature type="disulfide bond" evidence="1">
    <location>
        <begin position="74"/>
        <end position="169"/>
    </location>
</feature>
<feature type="strand" evidence="4">
    <location>
        <begin position="21"/>
        <end position="30"/>
    </location>
</feature>
<feature type="strand" evidence="4">
    <location>
        <begin position="33"/>
        <end position="44"/>
    </location>
</feature>
<feature type="strand" evidence="4">
    <location>
        <begin position="49"/>
        <end position="56"/>
    </location>
</feature>
<feature type="strand" evidence="4">
    <location>
        <begin position="61"/>
        <end position="64"/>
    </location>
</feature>
<feature type="strand" evidence="4">
    <location>
        <begin position="66"/>
        <end position="72"/>
    </location>
</feature>
<feature type="strand" evidence="4">
    <location>
        <begin position="77"/>
        <end position="79"/>
    </location>
</feature>
<feature type="strand" evidence="4">
    <location>
        <begin position="82"/>
        <end position="84"/>
    </location>
</feature>
<feature type="helix" evidence="4">
    <location>
        <begin position="87"/>
        <end position="89"/>
    </location>
</feature>
<feature type="strand" evidence="4">
    <location>
        <begin position="106"/>
        <end position="108"/>
    </location>
</feature>
<feature type="strand" evidence="4">
    <location>
        <begin position="116"/>
        <end position="118"/>
    </location>
</feature>
<feature type="strand" evidence="4">
    <location>
        <begin position="124"/>
        <end position="130"/>
    </location>
</feature>
<feature type="helix" evidence="4">
    <location>
        <begin position="136"/>
        <end position="139"/>
    </location>
</feature>
<feature type="strand" evidence="4">
    <location>
        <begin position="142"/>
        <end position="149"/>
    </location>
</feature>
<feature type="strand" evidence="4">
    <location>
        <begin position="153"/>
        <end position="158"/>
    </location>
</feature>
<feature type="helix" evidence="4">
    <location>
        <begin position="159"/>
        <end position="162"/>
    </location>
</feature>
<feature type="strand" evidence="4">
    <location>
        <begin position="165"/>
        <end position="172"/>
    </location>
</feature>
<gene>
    <name type="primary">sodC</name>
    <name type="ordered locus">BruAb2_0527</name>
</gene>